<comment type="function">
    <text evidence="1">Binds directly to 23S rRNA. The L1 stalk is quite mobile in the ribosome, and is involved in E site tRNA release.</text>
</comment>
<comment type="function">
    <text evidence="1">Protein L1 is also a translational repressor protein, it controls the translation of the L11 operon by binding to its mRNA.</text>
</comment>
<comment type="subunit">
    <text evidence="1">Part of the 50S ribosomal subunit.</text>
</comment>
<comment type="similarity">
    <text evidence="1">Belongs to the universal ribosomal protein uL1 family.</text>
</comment>
<protein>
    <recommendedName>
        <fullName evidence="1">Large ribosomal subunit protein uL1</fullName>
    </recommendedName>
    <alternativeName>
        <fullName evidence="3">50S ribosomal protein L1</fullName>
    </alternativeName>
</protein>
<reference key="1">
    <citation type="submission" date="2006-10" db="EMBL/GenBank/DDBJ databases">
        <authorList>
            <person name="Fleischmann R.D."/>
            <person name="Dodson R.J."/>
            <person name="Haft D.H."/>
            <person name="Merkel J.S."/>
            <person name="Nelson W.C."/>
            <person name="Fraser C.M."/>
        </authorList>
    </citation>
    <scope>NUCLEOTIDE SEQUENCE [LARGE SCALE GENOMIC DNA]</scope>
    <source>
        <strain>ATCC 700084 / mc(2)155</strain>
    </source>
</reference>
<reference key="2">
    <citation type="journal article" date="2007" name="Genome Biol.">
        <title>Interrupted coding sequences in Mycobacterium smegmatis: authentic mutations or sequencing errors?</title>
        <authorList>
            <person name="Deshayes C."/>
            <person name="Perrodou E."/>
            <person name="Gallien S."/>
            <person name="Euphrasie D."/>
            <person name="Schaeffer C."/>
            <person name="Van-Dorsselaer A."/>
            <person name="Poch O."/>
            <person name="Lecompte O."/>
            <person name="Reyrat J.-M."/>
        </authorList>
    </citation>
    <scope>NUCLEOTIDE SEQUENCE [LARGE SCALE GENOMIC DNA]</scope>
    <source>
        <strain>ATCC 700084 / mc(2)155</strain>
    </source>
</reference>
<reference key="3">
    <citation type="journal article" date="2009" name="Genome Res.">
        <title>Ortho-proteogenomics: multiple proteomes investigation through orthology and a new MS-based protocol.</title>
        <authorList>
            <person name="Gallien S."/>
            <person name="Perrodou E."/>
            <person name="Carapito C."/>
            <person name="Deshayes C."/>
            <person name="Reyrat J.-M."/>
            <person name="Van Dorsselaer A."/>
            <person name="Poch O."/>
            <person name="Schaeffer C."/>
            <person name="Lecompte O."/>
        </authorList>
    </citation>
    <scope>NUCLEOTIDE SEQUENCE [LARGE SCALE GENOMIC DNA]</scope>
    <scope>IDENTIFICATION BY MASS SPECTROMETRY [LARGE SCALE ANALYSIS]</scope>
    <scope>CLEAVAGE OF INITIATOR METHIONINE</scope>
    <source>
        <strain>ATCC 700084 / mc(2)155</strain>
    </source>
</reference>
<accession>A0QS46</accession>
<accession>I7FXZ3</accession>
<evidence type="ECO:0000255" key="1">
    <source>
        <dbReference type="HAMAP-Rule" id="MF_01318"/>
    </source>
</evidence>
<evidence type="ECO:0000269" key="2">
    <source>
    </source>
</evidence>
<evidence type="ECO:0000305" key="3"/>
<sequence length="235" mass="25020">MSKNSKAYREAAEKVDRTKLYTPLEAAKLAKETSSKKQDATVEVAIRLGVDPRKADQMVRGTVNLPHGTGKTARVAVFAVGEKAEQAQAAGADIVGSDDLIEKIQGGFLDFDAAIATPDQMAKVGRIARVLGPRGLMPNPKTGTVTPDVAKAVQDIKGGKINFRVDKQANLHFIIGKASFDETKLAENYGAALDEVLRAKPSSSKGRYLKKVTVSTTTGPGIPVDPSVTRNFTEA</sequence>
<proteinExistence type="evidence at protein level"/>
<keyword id="KW-0002">3D-structure</keyword>
<keyword id="KW-1185">Reference proteome</keyword>
<keyword id="KW-0678">Repressor</keyword>
<keyword id="KW-0687">Ribonucleoprotein</keyword>
<keyword id="KW-0689">Ribosomal protein</keyword>
<keyword id="KW-0694">RNA-binding</keyword>
<keyword id="KW-0699">rRNA-binding</keyword>
<keyword id="KW-0810">Translation regulation</keyword>
<keyword id="KW-0820">tRNA-binding</keyword>
<gene>
    <name evidence="1" type="primary">rplA</name>
    <name type="ordered locus">MSMEG_1347</name>
    <name type="ordered locus">MSMEI_1309</name>
</gene>
<organism>
    <name type="scientific">Mycolicibacterium smegmatis (strain ATCC 700084 / mc(2)155)</name>
    <name type="common">Mycobacterium smegmatis</name>
    <dbReference type="NCBI Taxonomy" id="246196"/>
    <lineage>
        <taxon>Bacteria</taxon>
        <taxon>Bacillati</taxon>
        <taxon>Actinomycetota</taxon>
        <taxon>Actinomycetes</taxon>
        <taxon>Mycobacteriales</taxon>
        <taxon>Mycobacteriaceae</taxon>
        <taxon>Mycolicibacterium</taxon>
    </lineage>
</organism>
<feature type="initiator methionine" description="Removed" evidence="2">
    <location>
        <position position="1"/>
    </location>
</feature>
<feature type="chain" id="PRO_0000308051" description="Large ribosomal subunit protein uL1">
    <location>
        <begin position="2"/>
        <end position="235"/>
    </location>
</feature>
<name>RL1_MYCS2</name>
<dbReference type="EMBL" id="CP000480">
    <property type="protein sequence ID" value="ABK75379.1"/>
    <property type="molecule type" value="Genomic_DNA"/>
</dbReference>
<dbReference type="EMBL" id="CP001663">
    <property type="protein sequence ID" value="AFP37782.1"/>
    <property type="molecule type" value="Genomic_DNA"/>
</dbReference>
<dbReference type="RefSeq" id="WP_003892735.1">
    <property type="nucleotide sequence ID" value="NZ_SIJM01000030.1"/>
</dbReference>
<dbReference type="RefSeq" id="YP_885734.1">
    <property type="nucleotide sequence ID" value="NC_008596.1"/>
</dbReference>
<dbReference type="PDB" id="8V9J">
    <property type="method" value="EM"/>
    <property type="resolution" value="3.10 A"/>
    <property type="chains" value="K=1-235"/>
</dbReference>
<dbReference type="PDB" id="8V9K">
    <property type="method" value="EM"/>
    <property type="resolution" value="3.10 A"/>
    <property type="chains" value="K=1-235"/>
</dbReference>
<dbReference type="PDBsum" id="8V9J"/>
<dbReference type="PDBsum" id="8V9K"/>
<dbReference type="EMDB" id="EMD-43074"/>
<dbReference type="EMDB" id="EMD-43075"/>
<dbReference type="SMR" id="A0QS46"/>
<dbReference type="STRING" id="246196.MSMEG_1347"/>
<dbReference type="PaxDb" id="246196-MSMEI_1309"/>
<dbReference type="GeneID" id="93456190"/>
<dbReference type="KEGG" id="msb:LJ00_06715"/>
<dbReference type="KEGG" id="msg:MSMEI_1309"/>
<dbReference type="KEGG" id="msm:MSMEG_1347"/>
<dbReference type="PATRIC" id="fig|246196.19.peg.1331"/>
<dbReference type="eggNOG" id="COG0081">
    <property type="taxonomic scope" value="Bacteria"/>
</dbReference>
<dbReference type="OrthoDB" id="9803740at2"/>
<dbReference type="Proteomes" id="UP000000757">
    <property type="component" value="Chromosome"/>
</dbReference>
<dbReference type="Proteomes" id="UP000006158">
    <property type="component" value="Chromosome"/>
</dbReference>
<dbReference type="GO" id="GO:0015934">
    <property type="term" value="C:large ribosomal subunit"/>
    <property type="evidence" value="ECO:0007669"/>
    <property type="project" value="InterPro"/>
</dbReference>
<dbReference type="GO" id="GO:0019843">
    <property type="term" value="F:rRNA binding"/>
    <property type="evidence" value="ECO:0007669"/>
    <property type="project" value="UniProtKB-UniRule"/>
</dbReference>
<dbReference type="GO" id="GO:0003735">
    <property type="term" value="F:structural constituent of ribosome"/>
    <property type="evidence" value="ECO:0007669"/>
    <property type="project" value="InterPro"/>
</dbReference>
<dbReference type="GO" id="GO:0000049">
    <property type="term" value="F:tRNA binding"/>
    <property type="evidence" value="ECO:0007669"/>
    <property type="project" value="UniProtKB-KW"/>
</dbReference>
<dbReference type="GO" id="GO:0006417">
    <property type="term" value="P:regulation of translation"/>
    <property type="evidence" value="ECO:0007669"/>
    <property type="project" value="UniProtKB-KW"/>
</dbReference>
<dbReference type="GO" id="GO:0006412">
    <property type="term" value="P:translation"/>
    <property type="evidence" value="ECO:0007669"/>
    <property type="project" value="UniProtKB-UniRule"/>
</dbReference>
<dbReference type="CDD" id="cd00403">
    <property type="entry name" value="Ribosomal_L1"/>
    <property type="match status" value="1"/>
</dbReference>
<dbReference type="FunFam" id="3.40.50.790:FF:000001">
    <property type="entry name" value="50S ribosomal protein L1"/>
    <property type="match status" value="1"/>
</dbReference>
<dbReference type="Gene3D" id="3.30.190.20">
    <property type="match status" value="1"/>
</dbReference>
<dbReference type="Gene3D" id="3.40.50.790">
    <property type="match status" value="1"/>
</dbReference>
<dbReference type="HAMAP" id="MF_01318_B">
    <property type="entry name" value="Ribosomal_uL1_B"/>
    <property type="match status" value="1"/>
</dbReference>
<dbReference type="InterPro" id="IPR005878">
    <property type="entry name" value="Ribosom_uL1_bac-type"/>
</dbReference>
<dbReference type="InterPro" id="IPR002143">
    <property type="entry name" value="Ribosomal_uL1"/>
</dbReference>
<dbReference type="InterPro" id="IPR023674">
    <property type="entry name" value="Ribosomal_uL1-like"/>
</dbReference>
<dbReference type="InterPro" id="IPR028364">
    <property type="entry name" value="Ribosomal_uL1/biogenesis"/>
</dbReference>
<dbReference type="InterPro" id="IPR016095">
    <property type="entry name" value="Ribosomal_uL1_3-a/b-sand"/>
</dbReference>
<dbReference type="InterPro" id="IPR023673">
    <property type="entry name" value="Ribosomal_uL1_CS"/>
</dbReference>
<dbReference type="NCBIfam" id="TIGR01169">
    <property type="entry name" value="rplA_bact"/>
    <property type="match status" value="1"/>
</dbReference>
<dbReference type="PANTHER" id="PTHR36427">
    <property type="entry name" value="54S RIBOSOMAL PROTEIN L1, MITOCHONDRIAL"/>
    <property type="match status" value="1"/>
</dbReference>
<dbReference type="PANTHER" id="PTHR36427:SF3">
    <property type="entry name" value="LARGE RIBOSOMAL SUBUNIT PROTEIN UL1M"/>
    <property type="match status" value="1"/>
</dbReference>
<dbReference type="Pfam" id="PF00687">
    <property type="entry name" value="Ribosomal_L1"/>
    <property type="match status" value="1"/>
</dbReference>
<dbReference type="PIRSF" id="PIRSF002155">
    <property type="entry name" value="Ribosomal_L1"/>
    <property type="match status" value="1"/>
</dbReference>
<dbReference type="SUPFAM" id="SSF56808">
    <property type="entry name" value="Ribosomal protein L1"/>
    <property type="match status" value="1"/>
</dbReference>
<dbReference type="PROSITE" id="PS01199">
    <property type="entry name" value="RIBOSOMAL_L1"/>
    <property type="match status" value="1"/>
</dbReference>